<sequence length="241" mass="26401">MSNFAVSLPEVIAVLPAAGIGSRMLVDCPKQYLTVGGKTIIEHAIFSLLHHPRIQRVIVVIHPQDTQFSRLSVAQDPRISTVYGGDQRANSVMAGLQLAGQAEWVLVHDAARPCLHLDDLSRLLSITECSQVGGILAAPVRDTMKRAEPGIQAIAHTVDRQDLWHALTPQLFPLELLKLCLSRALREGVAVTDEASALEHCGYHPILVTGRSDNIKVTRPEDLALAEFYLTQRQSLNNDSL</sequence>
<reference key="1">
    <citation type="submission" date="2007-02" db="EMBL/GenBank/DDBJ databases">
        <title>Complete sequence of chromosome of Yersinia pestis Pestoides F.</title>
        <authorList>
            <consortium name="US DOE Joint Genome Institute"/>
            <person name="Copeland A."/>
            <person name="Lucas S."/>
            <person name="Lapidus A."/>
            <person name="Barry K."/>
            <person name="Detter J.C."/>
            <person name="Glavina del Rio T."/>
            <person name="Hammon N."/>
            <person name="Israni S."/>
            <person name="Dalin E."/>
            <person name="Tice H."/>
            <person name="Pitluck S."/>
            <person name="Di Bartolo G."/>
            <person name="Chain P."/>
            <person name="Malfatti S."/>
            <person name="Shin M."/>
            <person name="Vergez L."/>
            <person name="Schmutz J."/>
            <person name="Larimer F."/>
            <person name="Land M."/>
            <person name="Hauser L."/>
            <person name="Worsham P."/>
            <person name="Chu M."/>
            <person name="Bearden S."/>
            <person name="Garcia E."/>
            <person name="Richardson P."/>
        </authorList>
    </citation>
    <scope>NUCLEOTIDE SEQUENCE [LARGE SCALE GENOMIC DNA]</scope>
    <source>
        <strain>Pestoides F</strain>
    </source>
</reference>
<feature type="chain" id="PRO_1000022959" description="2-C-methyl-D-erythritol 4-phosphate cytidylyltransferase">
    <location>
        <begin position="1"/>
        <end position="241"/>
    </location>
</feature>
<feature type="site" description="Transition state stabilizer" evidence="1">
    <location>
        <position position="23"/>
    </location>
</feature>
<feature type="site" description="Transition state stabilizer" evidence="1">
    <location>
        <position position="30"/>
    </location>
</feature>
<feature type="site" description="Positions MEP for the nucleophilic attack" evidence="1">
    <location>
        <position position="160"/>
    </location>
</feature>
<feature type="site" description="Positions MEP for the nucleophilic attack" evidence="1">
    <location>
        <position position="216"/>
    </location>
</feature>
<name>ISPD_YERPP</name>
<organism>
    <name type="scientific">Yersinia pestis (strain Pestoides F)</name>
    <dbReference type="NCBI Taxonomy" id="386656"/>
    <lineage>
        <taxon>Bacteria</taxon>
        <taxon>Pseudomonadati</taxon>
        <taxon>Pseudomonadota</taxon>
        <taxon>Gammaproteobacteria</taxon>
        <taxon>Enterobacterales</taxon>
        <taxon>Yersiniaceae</taxon>
        <taxon>Yersinia</taxon>
    </lineage>
</organism>
<dbReference type="EC" id="2.7.7.60" evidence="1"/>
<dbReference type="EMBL" id="CP000668">
    <property type="protein sequence ID" value="ABP41359.1"/>
    <property type="molecule type" value="Genomic_DNA"/>
</dbReference>
<dbReference type="RefSeq" id="WP_002209391.1">
    <property type="nucleotide sequence ID" value="NZ_CP009715.1"/>
</dbReference>
<dbReference type="SMR" id="A4TPZ7"/>
<dbReference type="GeneID" id="57975348"/>
<dbReference type="KEGG" id="ypp:YPDSF_2999"/>
<dbReference type="PATRIC" id="fig|386656.14.peg.1364"/>
<dbReference type="UniPathway" id="UPA00056">
    <property type="reaction ID" value="UER00093"/>
</dbReference>
<dbReference type="GO" id="GO:0050518">
    <property type="term" value="F:2-C-methyl-D-erythritol 4-phosphate cytidylyltransferase activity"/>
    <property type="evidence" value="ECO:0007669"/>
    <property type="project" value="UniProtKB-UniRule"/>
</dbReference>
<dbReference type="GO" id="GO:0019288">
    <property type="term" value="P:isopentenyl diphosphate biosynthetic process, methylerythritol 4-phosphate pathway"/>
    <property type="evidence" value="ECO:0007669"/>
    <property type="project" value="UniProtKB-UniRule"/>
</dbReference>
<dbReference type="CDD" id="cd02516">
    <property type="entry name" value="CDP-ME_synthetase"/>
    <property type="match status" value="1"/>
</dbReference>
<dbReference type="FunFam" id="3.90.550.10:FF:000003">
    <property type="entry name" value="2-C-methyl-D-erythritol 4-phosphate cytidylyltransferase"/>
    <property type="match status" value="1"/>
</dbReference>
<dbReference type="Gene3D" id="3.90.550.10">
    <property type="entry name" value="Spore Coat Polysaccharide Biosynthesis Protein SpsA, Chain A"/>
    <property type="match status" value="1"/>
</dbReference>
<dbReference type="HAMAP" id="MF_00108">
    <property type="entry name" value="IspD"/>
    <property type="match status" value="1"/>
</dbReference>
<dbReference type="InterPro" id="IPR001228">
    <property type="entry name" value="IspD"/>
</dbReference>
<dbReference type="InterPro" id="IPR034683">
    <property type="entry name" value="IspD/TarI"/>
</dbReference>
<dbReference type="InterPro" id="IPR050088">
    <property type="entry name" value="IspD/TarI_cytidylyltransf_bact"/>
</dbReference>
<dbReference type="InterPro" id="IPR018294">
    <property type="entry name" value="ISPD_synthase_CS"/>
</dbReference>
<dbReference type="InterPro" id="IPR029044">
    <property type="entry name" value="Nucleotide-diphossugar_trans"/>
</dbReference>
<dbReference type="NCBIfam" id="TIGR00453">
    <property type="entry name" value="ispD"/>
    <property type="match status" value="1"/>
</dbReference>
<dbReference type="PANTHER" id="PTHR32125">
    <property type="entry name" value="2-C-METHYL-D-ERYTHRITOL 4-PHOSPHATE CYTIDYLYLTRANSFERASE, CHLOROPLASTIC"/>
    <property type="match status" value="1"/>
</dbReference>
<dbReference type="PANTHER" id="PTHR32125:SF4">
    <property type="entry name" value="2-C-METHYL-D-ERYTHRITOL 4-PHOSPHATE CYTIDYLYLTRANSFERASE, CHLOROPLASTIC"/>
    <property type="match status" value="1"/>
</dbReference>
<dbReference type="Pfam" id="PF01128">
    <property type="entry name" value="IspD"/>
    <property type="match status" value="1"/>
</dbReference>
<dbReference type="SUPFAM" id="SSF53448">
    <property type="entry name" value="Nucleotide-diphospho-sugar transferases"/>
    <property type="match status" value="1"/>
</dbReference>
<dbReference type="PROSITE" id="PS01295">
    <property type="entry name" value="ISPD"/>
    <property type="match status" value="1"/>
</dbReference>
<proteinExistence type="inferred from homology"/>
<evidence type="ECO:0000255" key="1">
    <source>
        <dbReference type="HAMAP-Rule" id="MF_00108"/>
    </source>
</evidence>
<comment type="function">
    <text evidence="1">Catalyzes the formation of 4-diphosphocytidyl-2-C-methyl-D-erythritol from CTP and 2-C-methyl-D-erythritol 4-phosphate (MEP).</text>
</comment>
<comment type="catalytic activity">
    <reaction evidence="1">
        <text>2-C-methyl-D-erythritol 4-phosphate + CTP + H(+) = 4-CDP-2-C-methyl-D-erythritol + diphosphate</text>
        <dbReference type="Rhea" id="RHEA:13429"/>
        <dbReference type="ChEBI" id="CHEBI:15378"/>
        <dbReference type="ChEBI" id="CHEBI:33019"/>
        <dbReference type="ChEBI" id="CHEBI:37563"/>
        <dbReference type="ChEBI" id="CHEBI:57823"/>
        <dbReference type="ChEBI" id="CHEBI:58262"/>
        <dbReference type="EC" id="2.7.7.60"/>
    </reaction>
</comment>
<comment type="pathway">
    <text evidence="1">Isoprenoid biosynthesis; isopentenyl diphosphate biosynthesis via DXP pathway; isopentenyl diphosphate from 1-deoxy-D-xylulose 5-phosphate: step 2/6.</text>
</comment>
<comment type="subunit">
    <text evidence="1">Homodimer.</text>
</comment>
<comment type="similarity">
    <text evidence="1">Belongs to the IspD/TarI cytidylyltransferase family. IspD subfamily.</text>
</comment>
<protein>
    <recommendedName>
        <fullName evidence="1">2-C-methyl-D-erythritol 4-phosphate cytidylyltransferase</fullName>
        <ecNumber evidence="1">2.7.7.60</ecNumber>
    </recommendedName>
    <alternativeName>
        <fullName evidence="1">4-diphosphocytidyl-2C-methyl-D-erythritol synthase</fullName>
    </alternativeName>
    <alternativeName>
        <fullName evidence="1">MEP cytidylyltransferase</fullName>
        <shortName evidence="1">MCT</shortName>
    </alternativeName>
</protein>
<keyword id="KW-0414">Isoprene biosynthesis</keyword>
<keyword id="KW-0548">Nucleotidyltransferase</keyword>
<keyword id="KW-0808">Transferase</keyword>
<gene>
    <name evidence="1" type="primary">ispD</name>
    <name type="ordered locus">YPDSF_2999</name>
</gene>
<accession>A4TPZ7</accession>